<feature type="initiator methionine" description="Removed">
    <location>
        <position position="1"/>
    </location>
</feature>
<feature type="chain" id="PRO_0000209526" description="Tautomerase PptA">
    <location>
        <begin position="2"/>
        <end position="77"/>
    </location>
</feature>
<feature type="active site" description="Proton acceptor; via imino nitrogen">
    <location>
        <position position="2"/>
    </location>
</feature>
<feature type="strand" evidence="3">
    <location>
        <begin position="3"/>
        <end position="9"/>
    </location>
</feature>
<feature type="helix" evidence="3">
    <location>
        <begin position="15"/>
        <end position="33"/>
    </location>
</feature>
<feature type="helix" evidence="3">
    <location>
        <begin position="37"/>
        <end position="39"/>
    </location>
</feature>
<feature type="strand" evidence="3">
    <location>
        <begin position="41"/>
        <end position="46"/>
    </location>
</feature>
<feature type="helix" evidence="3">
    <location>
        <begin position="49"/>
        <end position="51"/>
    </location>
</feature>
<feature type="helix" evidence="3">
    <location>
        <begin position="52"/>
        <end position="58"/>
    </location>
</feature>
<feature type="turn" evidence="3">
    <location>
        <begin position="59"/>
        <end position="66"/>
    </location>
</feature>
<reference key="1">
    <citation type="journal article" date="1993" name="J. Bacteriol.">
        <title>Rhs elements of Escherichia coli K-12: complex composites of shared and unique components that have different evolutionary histories.</title>
        <authorList>
            <person name="Zhao S."/>
            <person name="Sandt C.H."/>
            <person name="Feulner G."/>
            <person name="Vlazny D.A."/>
            <person name="Gray J.A."/>
            <person name="Hill C.W."/>
        </authorList>
    </citation>
    <scope>NUCLEOTIDE SEQUENCE [GENOMIC DNA]</scope>
    <source>
        <strain>K12</strain>
    </source>
</reference>
<reference key="2">
    <citation type="journal article" date="1996" name="DNA Res.">
        <title>A 570-kb DNA sequence of the Escherichia coli K-12 genome corresponding to the 28.0-40.1 min region on the linkage map.</title>
        <authorList>
            <person name="Aiba H."/>
            <person name="Baba T."/>
            <person name="Fujita K."/>
            <person name="Hayashi K."/>
            <person name="Inada T."/>
            <person name="Isono K."/>
            <person name="Itoh T."/>
            <person name="Kasai H."/>
            <person name="Kashimoto K."/>
            <person name="Kimura S."/>
            <person name="Kitakawa M."/>
            <person name="Kitagawa M."/>
            <person name="Makino K."/>
            <person name="Miki T."/>
            <person name="Mizobuchi K."/>
            <person name="Mori H."/>
            <person name="Mori T."/>
            <person name="Motomura K."/>
            <person name="Nakade S."/>
            <person name="Nakamura Y."/>
            <person name="Nashimoto H."/>
            <person name="Nishio Y."/>
            <person name="Oshima T."/>
            <person name="Saito N."/>
            <person name="Sampei G."/>
            <person name="Seki Y."/>
            <person name="Sivasundaram S."/>
            <person name="Tagami H."/>
            <person name="Takeda J."/>
            <person name="Takemoto K."/>
            <person name="Takeuchi Y."/>
            <person name="Wada C."/>
            <person name="Yamamoto Y."/>
            <person name="Horiuchi T."/>
        </authorList>
    </citation>
    <scope>NUCLEOTIDE SEQUENCE [LARGE SCALE GENOMIC DNA]</scope>
    <source>
        <strain>K12 / W3110 / ATCC 27325 / DSM 5911</strain>
    </source>
</reference>
<reference key="3">
    <citation type="journal article" date="1997" name="Science">
        <title>The complete genome sequence of Escherichia coli K-12.</title>
        <authorList>
            <person name="Blattner F.R."/>
            <person name="Plunkett G. III"/>
            <person name="Bloch C.A."/>
            <person name="Perna N.T."/>
            <person name="Burland V."/>
            <person name="Riley M."/>
            <person name="Collado-Vides J."/>
            <person name="Glasner J.D."/>
            <person name="Rode C.K."/>
            <person name="Mayhew G.F."/>
            <person name="Gregor J."/>
            <person name="Davis N.W."/>
            <person name="Kirkpatrick H.A."/>
            <person name="Goeden M.A."/>
            <person name="Rose D.J."/>
            <person name="Mau B."/>
            <person name="Shao Y."/>
        </authorList>
    </citation>
    <scope>NUCLEOTIDE SEQUENCE [LARGE SCALE GENOMIC DNA]</scope>
    <source>
        <strain>K12 / MG1655 / ATCC 47076</strain>
    </source>
</reference>
<reference key="4">
    <citation type="journal article" date="2006" name="Mol. Syst. Biol.">
        <title>Highly accurate genome sequences of Escherichia coli K-12 strains MG1655 and W3110.</title>
        <authorList>
            <person name="Hayashi K."/>
            <person name="Morooka N."/>
            <person name="Yamamoto Y."/>
            <person name="Fujita K."/>
            <person name="Isono K."/>
            <person name="Choi S."/>
            <person name="Ohtsubo E."/>
            <person name="Baba T."/>
            <person name="Wanner B.L."/>
            <person name="Mori H."/>
            <person name="Horiuchi T."/>
        </authorList>
    </citation>
    <scope>NUCLEOTIDE SEQUENCE [LARGE SCALE GENOMIC DNA]</scope>
    <source>
        <strain>K12 / W3110 / ATCC 27325 / DSM 5911</strain>
    </source>
</reference>
<reference key="5">
    <citation type="journal article" date="2002" name="Biochemistry">
        <title>The crystal structure of YdcE, a 4-oxalocrotonate tautomerase homologue from Escherichia coli, confirms the structural basis for oligomer diversity.</title>
        <authorList>
            <person name="Almrud J.J."/>
            <person name="Kern A.D."/>
            <person name="Wang S.C."/>
            <person name="Czerwinski R.M."/>
            <person name="Johnson W.H. Jr."/>
            <person name="Murzin A.G."/>
            <person name="Hackert M.L."/>
            <person name="Whitman C.P."/>
        </authorList>
    </citation>
    <scope>X-RAY CRYSTALLOGRAPHY (1.35 ANGSTROMS) OF NATIVE PROTEIN AND COMPLEX WITH INHIBITOR</scope>
    <scope>FUNCTION</scope>
    <scope>ACTIVITY REGULATION</scope>
    <scope>BIOPHYSICOCHEMICAL PROPERTIES</scope>
    <scope>SUBUNIT</scope>
    <scope>MASS SPECTROMETRY</scope>
    <source>
        <strain>K12</strain>
    </source>
</reference>
<organism>
    <name type="scientific">Escherichia coli (strain K12)</name>
    <dbReference type="NCBI Taxonomy" id="83333"/>
    <lineage>
        <taxon>Bacteria</taxon>
        <taxon>Pseudomonadati</taxon>
        <taxon>Pseudomonadota</taxon>
        <taxon>Gammaproteobacteria</taxon>
        <taxon>Enterobacterales</taxon>
        <taxon>Enterobacteriaceae</taxon>
        <taxon>Escherichia</taxon>
    </lineage>
</organism>
<evidence type="ECO:0000269" key="1">
    <source>
    </source>
</evidence>
<evidence type="ECO:0000305" key="2"/>
<evidence type="ECO:0007829" key="3">
    <source>
        <dbReference type="PDB" id="1GYX"/>
    </source>
</evidence>
<comment type="function">
    <text evidence="1">Can use enol isomers of phenylpyruvate, 2-hydroxy-2,4-pentadienoate and (p-hydroxyphenyl)pyruvate as substrates.</text>
</comment>
<comment type="activity regulation">
    <text evidence="1">Inhibited by (E)-2-fluoro-p-hydroxycinnamate.</text>
</comment>
<comment type="biophysicochemical properties">
    <kinetics>
        <KM evidence="1">205 uM for enol isomers of phenylpyruvate</KM>
        <KM evidence="1">220 uM for 2-hydroxy-2,4-pentadienoate</KM>
        <KM evidence="1">180 uM for (p-hydroxyphenyl)pyruvate</KM>
    </kinetics>
</comment>
<comment type="subunit">
    <text evidence="1">Homodimer.</text>
</comment>
<comment type="subcellular location">
    <subcellularLocation>
        <location evidence="2">Cytoplasm</location>
    </subcellularLocation>
</comment>
<comment type="mass spectrometry" mass="8540.0" method="Electrospray" evidence="1"/>
<comment type="similarity">
    <text evidence="2">Belongs to the 4-oxalocrotonate tautomerase family. PptA subfamily.</text>
</comment>
<accession>P31992</accession>
<name>PPTA_ECOLI</name>
<protein>
    <recommendedName>
        <fullName>Tautomerase PptA</fullName>
        <ecNumber>5.3.2.-</ecNumber>
    </recommendedName>
</protein>
<keyword id="KW-0002">3D-structure</keyword>
<keyword id="KW-0963">Cytoplasm</keyword>
<keyword id="KW-0413">Isomerase</keyword>
<keyword id="KW-1185">Reference proteome</keyword>
<sequence length="77" mass="8673">MPHIDIKCFPRELDEQQKAALAADITDVIIRHLNSKDSSISIALQQIQPESWQAIWDAEIAPQMEALIKKPGYSMNA</sequence>
<dbReference type="EC" id="5.3.2.-"/>
<dbReference type="EMBL" id="X60998">
    <property type="protein sequence ID" value="CAA43312.1"/>
    <property type="molecule type" value="Genomic_DNA"/>
</dbReference>
<dbReference type="EMBL" id="U00096">
    <property type="protein sequence ID" value="AAC74543.1"/>
    <property type="molecule type" value="Genomic_DNA"/>
</dbReference>
<dbReference type="EMBL" id="AP009048">
    <property type="protein sequence ID" value="BAA15092.1"/>
    <property type="molecule type" value="Genomic_DNA"/>
</dbReference>
<dbReference type="PIR" id="H64898">
    <property type="entry name" value="H64898"/>
</dbReference>
<dbReference type="RefSeq" id="NP_415978.1">
    <property type="nucleotide sequence ID" value="NC_000913.3"/>
</dbReference>
<dbReference type="RefSeq" id="WP_001120143.1">
    <property type="nucleotide sequence ID" value="NZ_SSZK01000038.1"/>
</dbReference>
<dbReference type="PDB" id="1GYJ">
    <property type="method" value="X-ray"/>
    <property type="resolution" value="2.10 A"/>
    <property type="chains" value="A/B=2-77"/>
</dbReference>
<dbReference type="PDB" id="1GYX">
    <property type="method" value="X-ray"/>
    <property type="resolution" value="1.35 A"/>
    <property type="chains" value="A/B=2-77"/>
</dbReference>
<dbReference type="PDB" id="1GYY">
    <property type="method" value="X-ray"/>
    <property type="resolution" value="1.35 A"/>
    <property type="chains" value="A/B=2-77"/>
</dbReference>
<dbReference type="PDBsum" id="1GYJ"/>
<dbReference type="PDBsum" id="1GYX"/>
<dbReference type="PDBsum" id="1GYY"/>
<dbReference type="SMR" id="P31992"/>
<dbReference type="BioGRID" id="4262891">
    <property type="interactions" value="40"/>
</dbReference>
<dbReference type="FunCoup" id="P31992">
    <property type="interactions" value="40"/>
</dbReference>
<dbReference type="IntAct" id="P31992">
    <property type="interactions" value="14"/>
</dbReference>
<dbReference type="STRING" id="511145.b1461"/>
<dbReference type="DrugBank" id="DB02384">
    <property type="generic name" value="(E)-2-Fluoro-P-Hydroxycinnamate"/>
</dbReference>
<dbReference type="jPOST" id="P31992"/>
<dbReference type="PaxDb" id="511145-b1461"/>
<dbReference type="EnsemblBacteria" id="AAC74543">
    <property type="protein sequence ID" value="AAC74543"/>
    <property type="gene ID" value="b1461"/>
</dbReference>
<dbReference type="GeneID" id="945731"/>
<dbReference type="KEGG" id="ecj:JW1456"/>
<dbReference type="KEGG" id="eco:b1461"/>
<dbReference type="KEGG" id="ecoc:C3026_08485"/>
<dbReference type="PATRIC" id="fig|1411691.4.peg.807"/>
<dbReference type="EchoBASE" id="EB1711"/>
<dbReference type="eggNOG" id="COG1942">
    <property type="taxonomic scope" value="Bacteria"/>
</dbReference>
<dbReference type="HOGENOM" id="CLU_183611_0_1_6"/>
<dbReference type="InParanoid" id="P31992"/>
<dbReference type="OMA" id="IKCFPRD"/>
<dbReference type="OrthoDB" id="3395834at2"/>
<dbReference type="BioCyc" id="EcoCyc:EG11761-MONOMER"/>
<dbReference type="BioCyc" id="MetaCyc:EG11761-MONOMER"/>
<dbReference type="SABIO-RK" id="P31992"/>
<dbReference type="EvolutionaryTrace" id="P31992"/>
<dbReference type="PRO" id="PR:P31992"/>
<dbReference type="Proteomes" id="UP000000625">
    <property type="component" value="Chromosome"/>
</dbReference>
<dbReference type="GO" id="GO:0005737">
    <property type="term" value="C:cytoplasm"/>
    <property type="evidence" value="ECO:0007669"/>
    <property type="project" value="UniProtKB-SubCell"/>
</dbReference>
<dbReference type="GO" id="GO:0016862">
    <property type="term" value="F:intramolecular oxidoreductase activity, interconverting keto- and enol-groups"/>
    <property type="evidence" value="ECO:0000314"/>
    <property type="project" value="EcoCyc"/>
</dbReference>
<dbReference type="GO" id="GO:0042803">
    <property type="term" value="F:protein homodimerization activity"/>
    <property type="evidence" value="ECO:0000314"/>
    <property type="project" value="EcoCyc"/>
</dbReference>
<dbReference type="Gene3D" id="3.30.429.10">
    <property type="entry name" value="Macrophage Migration Inhibitory Factor"/>
    <property type="match status" value="1"/>
</dbReference>
<dbReference type="HAMAP" id="MF_00718">
    <property type="entry name" value="Tautomerase_PptA"/>
    <property type="match status" value="1"/>
</dbReference>
<dbReference type="InterPro" id="IPR004370">
    <property type="entry name" value="4-OT-like_dom"/>
</dbReference>
<dbReference type="InterPro" id="IPR014347">
    <property type="entry name" value="Tautomerase/MIF_sf"/>
</dbReference>
<dbReference type="InterPro" id="IPR017284">
    <property type="entry name" value="Tautomerase_PptA"/>
</dbReference>
<dbReference type="NCBIfam" id="NF002324">
    <property type="entry name" value="PRK01271.1"/>
    <property type="match status" value="1"/>
</dbReference>
<dbReference type="Pfam" id="PF01361">
    <property type="entry name" value="Tautomerase"/>
    <property type="match status" value="1"/>
</dbReference>
<dbReference type="PIRSF" id="PIRSF037799">
    <property type="entry name" value="Tautomer_YdcE_prd"/>
    <property type="match status" value="1"/>
</dbReference>
<dbReference type="SUPFAM" id="SSF55331">
    <property type="entry name" value="Tautomerase/MIF"/>
    <property type="match status" value="1"/>
</dbReference>
<proteinExistence type="evidence at protein level"/>
<gene>
    <name type="primary">pptA</name>
    <name type="synonym">ydcE</name>
    <name type="ordered locus">b1461</name>
    <name type="ordered locus">JW1456</name>
</gene>